<feature type="chain" id="PRO_1000049947" description="Gamma-glutamyl phosphate reductase">
    <location>
        <begin position="1"/>
        <end position="432"/>
    </location>
</feature>
<evidence type="ECO:0000255" key="1">
    <source>
        <dbReference type="HAMAP-Rule" id="MF_00412"/>
    </source>
</evidence>
<comment type="function">
    <text evidence="1">Catalyzes the NADPH-dependent reduction of L-glutamate 5-phosphate into L-glutamate 5-semialdehyde and phosphate. The product spontaneously undergoes cyclization to form 1-pyrroline-5-carboxylate.</text>
</comment>
<comment type="catalytic activity">
    <reaction evidence="1">
        <text>L-glutamate 5-semialdehyde + phosphate + NADP(+) = L-glutamyl 5-phosphate + NADPH + H(+)</text>
        <dbReference type="Rhea" id="RHEA:19541"/>
        <dbReference type="ChEBI" id="CHEBI:15378"/>
        <dbReference type="ChEBI" id="CHEBI:43474"/>
        <dbReference type="ChEBI" id="CHEBI:57783"/>
        <dbReference type="ChEBI" id="CHEBI:58066"/>
        <dbReference type="ChEBI" id="CHEBI:58274"/>
        <dbReference type="ChEBI" id="CHEBI:58349"/>
        <dbReference type="EC" id="1.2.1.41"/>
    </reaction>
</comment>
<comment type="pathway">
    <text evidence="1">Amino-acid biosynthesis; L-proline biosynthesis; L-glutamate 5-semialdehyde from L-glutamate: step 2/2.</text>
</comment>
<comment type="subcellular location">
    <subcellularLocation>
        <location evidence="1">Cytoplasm</location>
    </subcellularLocation>
</comment>
<comment type="similarity">
    <text evidence="1">Belongs to the gamma-glutamyl phosphate reductase family.</text>
</comment>
<dbReference type="EC" id="1.2.1.41" evidence="1"/>
<dbReference type="EMBL" id="AP009044">
    <property type="protein sequence ID" value="BAF55241.1"/>
    <property type="molecule type" value="Genomic_DNA"/>
</dbReference>
<dbReference type="RefSeq" id="WP_003859321.1">
    <property type="nucleotide sequence ID" value="NC_009342.1"/>
</dbReference>
<dbReference type="SMR" id="A4QG75"/>
<dbReference type="GeneID" id="1020305"/>
<dbReference type="KEGG" id="cgt:cgR_2237"/>
<dbReference type="HOGENOM" id="CLU_030231_0_0_11"/>
<dbReference type="PhylomeDB" id="A4QG75"/>
<dbReference type="UniPathway" id="UPA00098">
    <property type="reaction ID" value="UER00360"/>
</dbReference>
<dbReference type="Proteomes" id="UP000006698">
    <property type="component" value="Chromosome"/>
</dbReference>
<dbReference type="GO" id="GO:0005737">
    <property type="term" value="C:cytoplasm"/>
    <property type="evidence" value="ECO:0007669"/>
    <property type="project" value="UniProtKB-SubCell"/>
</dbReference>
<dbReference type="GO" id="GO:0004350">
    <property type="term" value="F:glutamate-5-semialdehyde dehydrogenase activity"/>
    <property type="evidence" value="ECO:0007669"/>
    <property type="project" value="UniProtKB-UniRule"/>
</dbReference>
<dbReference type="GO" id="GO:0050661">
    <property type="term" value="F:NADP binding"/>
    <property type="evidence" value="ECO:0007669"/>
    <property type="project" value="InterPro"/>
</dbReference>
<dbReference type="GO" id="GO:0055129">
    <property type="term" value="P:L-proline biosynthetic process"/>
    <property type="evidence" value="ECO:0007669"/>
    <property type="project" value="UniProtKB-UniRule"/>
</dbReference>
<dbReference type="CDD" id="cd07079">
    <property type="entry name" value="ALDH_F18-19_ProA-GPR"/>
    <property type="match status" value="1"/>
</dbReference>
<dbReference type="Gene3D" id="3.40.605.10">
    <property type="entry name" value="Aldehyde Dehydrogenase, Chain A, domain 1"/>
    <property type="match status" value="1"/>
</dbReference>
<dbReference type="Gene3D" id="3.40.309.10">
    <property type="entry name" value="Aldehyde Dehydrogenase, Chain A, domain 2"/>
    <property type="match status" value="1"/>
</dbReference>
<dbReference type="HAMAP" id="MF_00412">
    <property type="entry name" value="ProA"/>
    <property type="match status" value="1"/>
</dbReference>
<dbReference type="InterPro" id="IPR016161">
    <property type="entry name" value="Ald_DH/histidinol_DH"/>
</dbReference>
<dbReference type="InterPro" id="IPR016163">
    <property type="entry name" value="Ald_DH_C"/>
</dbReference>
<dbReference type="InterPro" id="IPR016162">
    <property type="entry name" value="Ald_DH_N"/>
</dbReference>
<dbReference type="InterPro" id="IPR015590">
    <property type="entry name" value="Aldehyde_DH_dom"/>
</dbReference>
<dbReference type="InterPro" id="IPR020593">
    <property type="entry name" value="G-glutamylP_reductase_CS"/>
</dbReference>
<dbReference type="InterPro" id="IPR012134">
    <property type="entry name" value="Glu-5-SA_DH"/>
</dbReference>
<dbReference type="InterPro" id="IPR000965">
    <property type="entry name" value="GPR_dom"/>
</dbReference>
<dbReference type="NCBIfam" id="NF001221">
    <property type="entry name" value="PRK00197.1"/>
    <property type="match status" value="1"/>
</dbReference>
<dbReference type="NCBIfam" id="TIGR00407">
    <property type="entry name" value="proA"/>
    <property type="match status" value="1"/>
</dbReference>
<dbReference type="PANTHER" id="PTHR11063:SF8">
    <property type="entry name" value="DELTA-1-PYRROLINE-5-CARBOXYLATE SYNTHASE"/>
    <property type="match status" value="1"/>
</dbReference>
<dbReference type="PANTHER" id="PTHR11063">
    <property type="entry name" value="GLUTAMATE SEMIALDEHYDE DEHYDROGENASE"/>
    <property type="match status" value="1"/>
</dbReference>
<dbReference type="Pfam" id="PF00171">
    <property type="entry name" value="Aldedh"/>
    <property type="match status" value="1"/>
</dbReference>
<dbReference type="PIRSF" id="PIRSF000151">
    <property type="entry name" value="GPR"/>
    <property type="match status" value="1"/>
</dbReference>
<dbReference type="SUPFAM" id="SSF53720">
    <property type="entry name" value="ALDH-like"/>
    <property type="match status" value="1"/>
</dbReference>
<dbReference type="PROSITE" id="PS01223">
    <property type="entry name" value="PROA"/>
    <property type="match status" value="1"/>
</dbReference>
<proteinExistence type="inferred from homology"/>
<gene>
    <name evidence="1" type="primary">proA</name>
    <name type="ordered locus">cgR_2237</name>
</gene>
<reference key="1">
    <citation type="journal article" date="2007" name="Microbiology">
        <title>Comparative analysis of the Corynebacterium glutamicum group and complete genome sequence of strain R.</title>
        <authorList>
            <person name="Yukawa H."/>
            <person name="Omumasaba C.A."/>
            <person name="Nonaka H."/>
            <person name="Kos P."/>
            <person name="Okai N."/>
            <person name="Suzuki N."/>
            <person name="Suda M."/>
            <person name="Tsuge Y."/>
            <person name="Watanabe J."/>
            <person name="Ikeda Y."/>
            <person name="Vertes A.A."/>
            <person name="Inui M."/>
        </authorList>
    </citation>
    <scope>NUCLEOTIDE SEQUENCE [LARGE SCALE GENOMIC DNA]</scope>
    <source>
        <strain>R</strain>
    </source>
</reference>
<name>PROA_CORGB</name>
<accession>A4QG75</accession>
<keyword id="KW-0028">Amino-acid biosynthesis</keyword>
<keyword id="KW-0963">Cytoplasm</keyword>
<keyword id="KW-0521">NADP</keyword>
<keyword id="KW-0560">Oxidoreductase</keyword>
<keyword id="KW-0641">Proline biosynthesis</keyword>
<organism>
    <name type="scientific">Corynebacterium glutamicum (strain R)</name>
    <dbReference type="NCBI Taxonomy" id="340322"/>
    <lineage>
        <taxon>Bacteria</taxon>
        <taxon>Bacillati</taxon>
        <taxon>Actinomycetota</taxon>
        <taxon>Actinomycetes</taxon>
        <taxon>Mycobacteriales</taxon>
        <taxon>Corynebacteriaceae</taxon>
        <taxon>Corynebacterium</taxon>
    </lineage>
</organism>
<protein>
    <recommendedName>
        <fullName evidence="1">Gamma-glutamyl phosphate reductase</fullName>
        <shortName evidence="1">GPR</shortName>
        <ecNumber evidence="1">1.2.1.41</ecNumber>
    </recommendedName>
    <alternativeName>
        <fullName evidence="1">Glutamate-5-semialdehyde dehydrogenase</fullName>
    </alternativeName>
    <alternativeName>
        <fullName evidence="1">Glutamyl-gamma-semialdehyde dehydrogenase</fullName>
        <shortName evidence="1">GSA dehydrogenase</shortName>
    </alternativeName>
</protein>
<sequence length="432" mass="45667">MSSTTLTDDQIRDNERTEVLAKATAAKNIVPDIAVLGTGPKNAILRAAADELVARSAEIIEANASDIEAGRANGMEESMIDRLALDESRIEGIAGGLRQVAGLTDPVGEVLRGHVMENGIQMKQVRVPLGVMGMVYEARPNVTVDAFGLALKSGNVALLRGSSTAVHSNTKLVEILQDVLERFELPRETVQLLPCQTRGSVQDLITARGLVDVVIPRGGAGLINAVVTGATVPTIETGTGNCHFYIDAEAKLDQAIAMVINGKTRRCSVCNATETALLDAALSDSDKLAVVQALQEAGVTIHGRVAELEAFGATDVVEATETDWDSEYLSFDIAVAVVDGVDGALAHIAKYSTKHTEAIATQNIETAQRFADRVDAAAVMINASTAYTDGEQYGMGAEIGISTQKLHARGPMALPELTSTKWILQGTGQIRP</sequence>